<name>EFTS_STAA8</name>
<evidence type="ECO:0000255" key="1">
    <source>
        <dbReference type="HAMAP-Rule" id="MF_00050"/>
    </source>
</evidence>
<proteinExistence type="inferred from homology"/>
<dbReference type="EMBL" id="CP000253">
    <property type="protein sequence ID" value="ABD30335.1"/>
    <property type="molecule type" value="Genomic_DNA"/>
</dbReference>
<dbReference type="RefSeq" id="WP_000201387.1">
    <property type="nucleotide sequence ID" value="NZ_LS483365.1"/>
</dbReference>
<dbReference type="RefSeq" id="YP_499767.1">
    <property type="nucleotide sequence ID" value="NC_007795.1"/>
</dbReference>
<dbReference type="SMR" id="Q2FZ23"/>
<dbReference type="STRING" id="93061.SAOUHSC_01234"/>
<dbReference type="PaxDb" id="1280-SAXN108_1259"/>
<dbReference type="GeneID" id="3920259"/>
<dbReference type="KEGG" id="sao:SAOUHSC_01234"/>
<dbReference type="PATRIC" id="fig|93061.5.peg.1128"/>
<dbReference type="eggNOG" id="COG0264">
    <property type="taxonomic scope" value="Bacteria"/>
</dbReference>
<dbReference type="HOGENOM" id="CLU_047155_0_2_9"/>
<dbReference type="OrthoDB" id="9808348at2"/>
<dbReference type="PRO" id="PR:Q2FZ23"/>
<dbReference type="Proteomes" id="UP000008816">
    <property type="component" value="Chromosome"/>
</dbReference>
<dbReference type="GO" id="GO:0005737">
    <property type="term" value="C:cytoplasm"/>
    <property type="evidence" value="ECO:0007669"/>
    <property type="project" value="UniProtKB-SubCell"/>
</dbReference>
<dbReference type="GO" id="GO:0003746">
    <property type="term" value="F:translation elongation factor activity"/>
    <property type="evidence" value="ECO:0000318"/>
    <property type="project" value="GO_Central"/>
</dbReference>
<dbReference type="GO" id="GO:0006414">
    <property type="term" value="P:translational elongation"/>
    <property type="evidence" value="ECO:0000318"/>
    <property type="project" value="GO_Central"/>
</dbReference>
<dbReference type="CDD" id="cd14275">
    <property type="entry name" value="UBA_EF-Ts"/>
    <property type="match status" value="1"/>
</dbReference>
<dbReference type="FunFam" id="1.10.286.20:FF:000003">
    <property type="entry name" value="Elongation factor Ts"/>
    <property type="match status" value="1"/>
</dbReference>
<dbReference type="FunFam" id="1.10.8.10:FF:000001">
    <property type="entry name" value="Elongation factor Ts"/>
    <property type="match status" value="1"/>
</dbReference>
<dbReference type="FunFam" id="3.30.479.20:FF:000005">
    <property type="entry name" value="Elongation factor Ts"/>
    <property type="match status" value="1"/>
</dbReference>
<dbReference type="Gene3D" id="1.10.286.20">
    <property type="match status" value="1"/>
</dbReference>
<dbReference type="Gene3D" id="1.10.8.10">
    <property type="entry name" value="DNA helicase RuvA subunit, C-terminal domain"/>
    <property type="match status" value="1"/>
</dbReference>
<dbReference type="Gene3D" id="3.30.479.20">
    <property type="entry name" value="Elongation factor Ts, dimerisation domain"/>
    <property type="match status" value="2"/>
</dbReference>
<dbReference type="HAMAP" id="MF_00050">
    <property type="entry name" value="EF_Ts"/>
    <property type="match status" value="1"/>
</dbReference>
<dbReference type="InterPro" id="IPR036402">
    <property type="entry name" value="EF-Ts_dimer_sf"/>
</dbReference>
<dbReference type="InterPro" id="IPR001816">
    <property type="entry name" value="Transl_elong_EFTs/EF1B"/>
</dbReference>
<dbReference type="InterPro" id="IPR014039">
    <property type="entry name" value="Transl_elong_EFTs/EF1B_dimer"/>
</dbReference>
<dbReference type="InterPro" id="IPR018101">
    <property type="entry name" value="Transl_elong_Ts_CS"/>
</dbReference>
<dbReference type="InterPro" id="IPR009060">
    <property type="entry name" value="UBA-like_sf"/>
</dbReference>
<dbReference type="NCBIfam" id="TIGR00116">
    <property type="entry name" value="tsf"/>
    <property type="match status" value="1"/>
</dbReference>
<dbReference type="PANTHER" id="PTHR11741">
    <property type="entry name" value="ELONGATION FACTOR TS"/>
    <property type="match status" value="1"/>
</dbReference>
<dbReference type="PANTHER" id="PTHR11741:SF0">
    <property type="entry name" value="ELONGATION FACTOR TS, MITOCHONDRIAL"/>
    <property type="match status" value="1"/>
</dbReference>
<dbReference type="Pfam" id="PF00889">
    <property type="entry name" value="EF_TS"/>
    <property type="match status" value="1"/>
</dbReference>
<dbReference type="SUPFAM" id="SSF54713">
    <property type="entry name" value="Elongation factor Ts (EF-Ts), dimerisation domain"/>
    <property type="match status" value="2"/>
</dbReference>
<dbReference type="SUPFAM" id="SSF46934">
    <property type="entry name" value="UBA-like"/>
    <property type="match status" value="1"/>
</dbReference>
<dbReference type="PROSITE" id="PS01126">
    <property type="entry name" value="EF_TS_1"/>
    <property type="match status" value="1"/>
</dbReference>
<dbReference type="PROSITE" id="PS01127">
    <property type="entry name" value="EF_TS_2"/>
    <property type="match status" value="1"/>
</dbReference>
<accession>Q2FZ23</accession>
<feature type="chain" id="PRO_1000006189" description="Elongation factor Ts">
    <location>
        <begin position="1"/>
        <end position="293"/>
    </location>
</feature>
<feature type="region of interest" description="Involved in Mg(2+) ion dislocation from EF-Tu" evidence="1">
    <location>
        <begin position="80"/>
        <end position="83"/>
    </location>
</feature>
<gene>
    <name evidence="1" type="primary">tsf</name>
    <name type="ordered locus">SAOUHSC_01234</name>
</gene>
<organism>
    <name type="scientific">Staphylococcus aureus (strain NCTC 8325 / PS 47)</name>
    <dbReference type="NCBI Taxonomy" id="93061"/>
    <lineage>
        <taxon>Bacteria</taxon>
        <taxon>Bacillati</taxon>
        <taxon>Bacillota</taxon>
        <taxon>Bacilli</taxon>
        <taxon>Bacillales</taxon>
        <taxon>Staphylococcaceae</taxon>
        <taxon>Staphylococcus</taxon>
    </lineage>
</organism>
<protein>
    <recommendedName>
        <fullName evidence="1">Elongation factor Ts</fullName>
        <shortName evidence="1">EF-Ts</shortName>
    </recommendedName>
</protein>
<sequence>MATISAKLVKELREKTGAGMMDCKKALTETDGDIDKAIDYLREKGIAKAAKKADRIAAEGLVHVETKGNDAVIVEINSETDFVARNEGFQELVKEIANQVLDTKAETVEALMETTLPNGKSVDERIKEAISTIGEKLSVRRFAIRTKTDNDAFGAYLHMGGRIGVLTVVEGSTDEEAARDVAMHIAAINPKYVSSEQVSEEEINHEREVLKQQALNEGKPENIVEKMVEGRLRKYLQEICAVDQDFVKNPDVTVEAFLKTKGGKLVDFVRYEVGEGMEKREENFADEVKGQMK</sequence>
<reference key="1">
    <citation type="book" date="2006" name="Gram positive pathogens, 2nd edition">
        <title>The Staphylococcus aureus NCTC 8325 genome.</title>
        <editorList>
            <person name="Fischetti V."/>
            <person name="Novick R."/>
            <person name="Ferretti J."/>
            <person name="Portnoy D."/>
            <person name="Rood J."/>
        </editorList>
        <authorList>
            <person name="Gillaspy A.F."/>
            <person name="Worrell V."/>
            <person name="Orvis J."/>
            <person name="Roe B.A."/>
            <person name="Dyer D.W."/>
            <person name="Iandolo J.J."/>
        </authorList>
    </citation>
    <scope>NUCLEOTIDE SEQUENCE [LARGE SCALE GENOMIC DNA]</scope>
    <source>
        <strain>NCTC 8325 / PS 47</strain>
    </source>
</reference>
<keyword id="KW-0963">Cytoplasm</keyword>
<keyword id="KW-0251">Elongation factor</keyword>
<keyword id="KW-0648">Protein biosynthesis</keyword>
<keyword id="KW-1185">Reference proteome</keyword>
<comment type="function">
    <text evidence="1">Associates with the EF-Tu.GDP complex and induces the exchange of GDP to GTP. It remains bound to the aminoacyl-tRNA.EF-Tu.GTP complex up to the GTP hydrolysis stage on the ribosome.</text>
</comment>
<comment type="subcellular location">
    <subcellularLocation>
        <location evidence="1">Cytoplasm</location>
    </subcellularLocation>
</comment>
<comment type="similarity">
    <text evidence="1">Belongs to the EF-Ts family.</text>
</comment>